<accession>A1KHV0</accession>
<organism>
    <name type="scientific">Mycobacterium bovis (strain BCG / Pasteur 1173P2)</name>
    <dbReference type="NCBI Taxonomy" id="410289"/>
    <lineage>
        <taxon>Bacteria</taxon>
        <taxon>Bacillati</taxon>
        <taxon>Actinomycetota</taxon>
        <taxon>Actinomycetes</taxon>
        <taxon>Mycobacteriales</taxon>
        <taxon>Mycobacteriaceae</taxon>
        <taxon>Mycobacterium</taxon>
        <taxon>Mycobacterium tuberculosis complex</taxon>
    </lineage>
</organism>
<name>PHS_MYCBP</name>
<proteinExistence type="inferred from homology"/>
<keyword id="KW-0456">Lyase</keyword>
<protein>
    <recommendedName>
        <fullName evidence="1">Putative pterin-4-alpha-carbinolamine dehydratase</fullName>
        <shortName evidence="1">PHS</shortName>
        <ecNumber evidence="1">4.2.1.96</ecNumber>
    </recommendedName>
    <alternativeName>
        <fullName evidence="1">4-alpha-hydroxy-tetrahydropterin dehydratase</fullName>
    </alternativeName>
    <alternativeName>
        <fullName evidence="1">Pterin carbinolamine dehydratase</fullName>
        <shortName evidence="1">PCD</shortName>
    </alternativeName>
</protein>
<comment type="catalytic activity">
    <reaction evidence="1">
        <text>(4aS,6R)-4a-hydroxy-L-erythro-5,6,7,8-tetrahydrobiopterin = (6R)-L-erythro-6,7-dihydrobiopterin + H2O</text>
        <dbReference type="Rhea" id="RHEA:11920"/>
        <dbReference type="ChEBI" id="CHEBI:15377"/>
        <dbReference type="ChEBI" id="CHEBI:15642"/>
        <dbReference type="ChEBI" id="CHEBI:43120"/>
        <dbReference type="EC" id="4.2.1.96"/>
    </reaction>
</comment>
<comment type="similarity">
    <text evidence="1">Belongs to the pterin-4-alpha-carbinolamine dehydratase family.</text>
</comment>
<dbReference type="EC" id="4.2.1.96" evidence="1"/>
<dbReference type="EMBL" id="AM408590">
    <property type="protein sequence ID" value="CAL71208.1"/>
    <property type="molecule type" value="Genomic_DNA"/>
</dbReference>
<dbReference type="RefSeq" id="WP_003406082.1">
    <property type="nucleotide sequence ID" value="NC_008769.1"/>
</dbReference>
<dbReference type="SMR" id="A1KHV0"/>
<dbReference type="KEGG" id="mbb:BCG_1221c"/>
<dbReference type="HOGENOM" id="CLU_081974_4_3_11"/>
<dbReference type="Proteomes" id="UP000001472">
    <property type="component" value="Chromosome"/>
</dbReference>
<dbReference type="GO" id="GO:0008124">
    <property type="term" value="F:4-alpha-hydroxytetrahydrobiopterin dehydratase activity"/>
    <property type="evidence" value="ECO:0007669"/>
    <property type="project" value="UniProtKB-UniRule"/>
</dbReference>
<dbReference type="GO" id="GO:0006729">
    <property type="term" value="P:tetrahydrobiopterin biosynthetic process"/>
    <property type="evidence" value="ECO:0007669"/>
    <property type="project" value="InterPro"/>
</dbReference>
<dbReference type="CDD" id="cd00488">
    <property type="entry name" value="PCD_DCoH"/>
    <property type="match status" value="1"/>
</dbReference>
<dbReference type="Gene3D" id="3.30.1360.20">
    <property type="entry name" value="Transcriptional coactivator/pterin dehydratase"/>
    <property type="match status" value="1"/>
</dbReference>
<dbReference type="HAMAP" id="MF_00434">
    <property type="entry name" value="Pterin_4_alpha"/>
    <property type="match status" value="1"/>
</dbReference>
<dbReference type="InterPro" id="IPR036428">
    <property type="entry name" value="PCD_sf"/>
</dbReference>
<dbReference type="InterPro" id="IPR001533">
    <property type="entry name" value="Pterin_deHydtase"/>
</dbReference>
<dbReference type="NCBIfam" id="NF002017">
    <property type="entry name" value="PRK00823.1-2"/>
    <property type="match status" value="1"/>
</dbReference>
<dbReference type="PANTHER" id="PTHR12599">
    <property type="entry name" value="PTERIN-4-ALPHA-CARBINOLAMINE DEHYDRATASE"/>
    <property type="match status" value="1"/>
</dbReference>
<dbReference type="PANTHER" id="PTHR12599:SF0">
    <property type="entry name" value="PTERIN-4-ALPHA-CARBINOLAMINE DEHYDRATASE"/>
    <property type="match status" value="1"/>
</dbReference>
<dbReference type="Pfam" id="PF01329">
    <property type="entry name" value="Pterin_4a"/>
    <property type="match status" value="1"/>
</dbReference>
<dbReference type="SUPFAM" id="SSF55248">
    <property type="entry name" value="PCD-like"/>
    <property type="match status" value="1"/>
</dbReference>
<evidence type="ECO:0000255" key="1">
    <source>
        <dbReference type="HAMAP-Rule" id="MF_00434"/>
    </source>
</evidence>
<gene>
    <name type="ordered locus">BCG_1221c</name>
</gene>
<reference key="1">
    <citation type="journal article" date="2007" name="Proc. Natl. Acad. Sci. U.S.A.">
        <title>Genome plasticity of BCG and impact on vaccine efficacy.</title>
        <authorList>
            <person name="Brosch R."/>
            <person name="Gordon S.V."/>
            <person name="Garnier T."/>
            <person name="Eiglmeier K."/>
            <person name="Frigui W."/>
            <person name="Valenti P."/>
            <person name="Dos Santos S."/>
            <person name="Duthoy S."/>
            <person name="Lacroix C."/>
            <person name="Garcia-Pelayo C."/>
            <person name="Inwald J.K."/>
            <person name="Golby P."/>
            <person name="Garcia J.N."/>
            <person name="Hewinson R.G."/>
            <person name="Behr M.A."/>
            <person name="Quail M.A."/>
            <person name="Churcher C."/>
            <person name="Barrell B.G."/>
            <person name="Parkhill J."/>
            <person name="Cole S.T."/>
        </authorList>
    </citation>
    <scope>NUCLEOTIDE SEQUENCE [LARGE SCALE GENOMIC DNA]</scope>
    <source>
        <strain>BCG / Pasteur 1173P2</strain>
    </source>
</reference>
<sequence>MAVLTDEQVDAALHDLNGWQRAGGVLRRSIKFPTFMAGIDAVRRVAERAEEVNHHPDIDIRWRTVTFALVTHAVGGITENDIAMAHDIDAMFGA</sequence>
<feature type="chain" id="PRO_1000050421" description="Putative pterin-4-alpha-carbinolamine dehydratase">
    <location>
        <begin position="1"/>
        <end position="94"/>
    </location>
</feature>